<reference key="1">
    <citation type="journal article" date="2008" name="Nat. Biotechnol.">
        <title>Genome sequencing and analysis of the biomass-degrading fungus Trichoderma reesei (syn. Hypocrea jecorina).</title>
        <authorList>
            <person name="Martinez D."/>
            <person name="Berka R.M."/>
            <person name="Henrissat B."/>
            <person name="Saloheimo M."/>
            <person name="Arvas M."/>
            <person name="Baker S.E."/>
            <person name="Chapman J."/>
            <person name="Chertkov O."/>
            <person name="Coutinho P.M."/>
            <person name="Cullen D."/>
            <person name="Danchin E.G."/>
            <person name="Grigoriev I.V."/>
            <person name="Harris P."/>
            <person name="Jackson M."/>
            <person name="Kubicek C.P."/>
            <person name="Han C.S."/>
            <person name="Ho I."/>
            <person name="Larrondo L.F."/>
            <person name="de Leon A.L."/>
            <person name="Magnuson J.K."/>
            <person name="Merino S."/>
            <person name="Misra M."/>
            <person name="Nelson B."/>
            <person name="Putnam N."/>
            <person name="Robbertse B."/>
            <person name="Salamov A.A."/>
            <person name="Schmoll M."/>
            <person name="Terry A."/>
            <person name="Thayer N."/>
            <person name="Westerholm-Parvinen A."/>
            <person name="Schoch C.L."/>
            <person name="Yao J."/>
            <person name="Barabote R."/>
            <person name="Nelson M.A."/>
            <person name="Detter C."/>
            <person name="Bruce D."/>
            <person name="Kuske C.R."/>
            <person name="Xie G."/>
            <person name="Richardson P."/>
            <person name="Rokhsar D.S."/>
            <person name="Lucas S.M."/>
            <person name="Rubin E.M."/>
            <person name="Dunn-Coleman N."/>
            <person name="Ward M."/>
            <person name="Brettin T.S."/>
        </authorList>
    </citation>
    <scope>NUCLEOTIDE SEQUENCE [LARGE SCALE GENOMIC DNA]</scope>
    <source>
        <strain>QM6a</strain>
    </source>
</reference>
<reference key="2">
    <citation type="journal article" date="2021" name="J. Fungi">
        <title>Trichoderma reesei Contains a Biosynthetic Gene Cluster That Encodes the Antifungal Agent Ilicicolin H.</title>
        <authorList>
            <person name="Shenouda M.L."/>
            <person name="Ambilika M."/>
            <person name="Cox R.J."/>
        </authorList>
    </citation>
    <scope>FUNCTION</scope>
    <scope>CATALYTIC ACTIVITY</scope>
    <scope>PATHWAY</scope>
</reference>
<organism>
    <name type="scientific">Hypocrea jecorina (strain QM6a)</name>
    <name type="common">Trichoderma reesei</name>
    <dbReference type="NCBI Taxonomy" id="431241"/>
    <lineage>
        <taxon>Eukaryota</taxon>
        <taxon>Fungi</taxon>
        <taxon>Dikarya</taxon>
        <taxon>Ascomycota</taxon>
        <taxon>Pezizomycotina</taxon>
        <taxon>Sordariomycetes</taxon>
        <taxon>Hypocreomycetidae</taxon>
        <taxon>Hypocreales</taxon>
        <taxon>Hypocreaceae</taxon>
        <taxon>Trichoderma</taxon>
    </lineage>
</organism>
<proteinExistence type="evidence at protein level"/>
<comment type="function">
    <text evidence="3 6">Trans-enoyl reductase; part of the gene cluster that mediates the biosynthesis of ilicicolin H, a 4-hydroxy-2-pyridonealkaloid that has potent and broad antifungal activities by inhibiting the mitochondrial respiration chain (PubMed:34947016). IliB collaborates with the hybrid PKS-NRPS synthetase iliA to assemble the backbone of ilicicolin H (PubMed:34947016). The PKS portion of iliA and trans-acting enoyl reductase iliB work together to construct an octaketide, and two methyl groups are introduced by the MT domain of iliA during the chain assembly (PubMed:34947016). The nascent chain is then condensed with tyrosine, catalyzed by the iliA C domain, and the resulting PKS-NRPS hybrid is offloaded by the iliA RED domain to form an advanced tetramic acid intermediate (PubMed:34947016). The biosynthesis of ilicicolin H starts with formation of the tetramic acid by the hybrid PKS-NRPS synthetase iliA with the partnering trans-enoyl reductase iliB since iliA lacks a designated enoylreductase (ER) domain. The cytochrome P450 monooxygenase iliC then catalyzes the ring expansion of the tetramate to the acyclic 2-pyridone. The pericyclase iliD further converts the acyclic 2-pyridone into 8-epi-ilicicolin H. 8-epi-ilicicolin H might then spontaneously convert to ilicicolin H since ilicicolin H is produced in the absence of the epimerase iliE, in contrast to what was observed for the Talaromyces variabilis ilicolin H biosynthetic pathway (Probable) (PubMed:34947016).</text>
</comment>
<comment type="catalytic activity">
    <reaction evidence="3">
        <text>N-[(4E,6E,10S,12Z,14E)-6,10-dimethyl-3-oxohexadeca-4,6,12,14-tetraenoyl]-L-tyrosyl-[ACP] = (3E,5S)-3-[(2E,4E,8S,10E,12Z)-1-hydroxy-4,8-dimethyltetradeca-2,4,10,12-tetraen-1-ylidene]-5-[(4-hydroxyphenyl)methyl]pyrrolidine-2,4-dione + holo-[ACP] + H(+)</text>
        <dbReference type="Rhea" id="RHEA:64548"/>
        <dbReference type="Rhea" id="RHEA-COMP:9685"/>
        <dbReference type="Rhea" id="RHEA-COMP:16623"/>
        <dbReference type="ChEBI" id="CHEBI:15378"/>
        <dbReference type="ChEBI" id="CHEBI:64479"/>
        <dbReference type="ChEBI" id="CHEBI:155890"/>
        <dbReference type="ChEBI" id="CHEBI:155893"/>
    </reaction>
    <physiologicalReaction direction="left-to-right" evidence="3">
        <dbReference type="Rhea" id="RHEA:64549"/>
    </physiologicalReaction>
</comment>
<comment type="pathway">
    <text evidence="3">Mycotoxin biosynthesis.</text>
</comment>
<comment type="subunit">
    <text evidence="1">Monomer.</text>
</comment>
<comment type="similarity">
    <text evidence="5">Belongs to the zinc-containing alcohol dehydrogenase family.</text>
</comment>
<evidence type="ECO:0000250" key="1">
    <source>
        <dbReference type="UniProtKB" id="Q9Y7D0"/>
    </source>
</evidence>
<evidence type="ECO:0000255" key="2"/>
<evidence type="ECO:0000269" key="3">
    <source>
    </source>
</evidence>
<evidence type="ECO:0000303" key="4">
    <source>
    </source>
</evidence>
<evidence type="ECO:0000305" key="5"/>
<evidence type="ECO:0000305" key="6">
    <source>
    </source>
</evidence>
<gene>
    <name evidence="4" type="primary">iliB</name>
    <name type="ORF">TRIREDRAFT_58289</name>
</gene>
<feature type="chain" id="PRO_0000455712" description="Trans-enoyl reductase iliB">
    <location>
        <begin position="1"/>
        <end position="350"/>
    </location>
</feature>
<feature type="binding site" evidence="1">
    <location>
        <begin position="50"/>
        <end position="53"/>
    </location>
    <ligand>
        <name>NADP(+)</name>
        <dbReference type="ChEBI" id="CHEBI:58349"/>
    </ligand>
</feature>
<feature type="binding site" evidence="2">
    <location>
        <begin position="145"/>
        <end position="152"/>
    </location>
    <ligand>
        <name>substrate</name>
    </ligand>
</feature>
<feature type="binding site" evidence="1">
    <location>
        <begin position="177"/>
        <end position="180"/>
    </location>
    <ligand>
        <name>NADP(+)</name>
        <dbReference type="ChEBI" id="CHEBI:58349"/>
    </ligand>
</feature>
<feature type="binding site" evidence="1">
    <location>
        <position position="195"/>
    </location>
    <ligand>
        <name>NADP(+)</name>
        <dbReference type="ChEBI" id="CHEBI:58349"/>
    </ligand>
</feature>
<feature type="binding site" evidence="1">
    <location>
        <begin position="242"/>
        <end position="243"/>
    </location>
    <ligand>
        <name>NADP(+)</name>
        <dbReference type="ChEBI" id="CHEBI:58349"/>
    </ligand>
</feature>
<feature type="binding site" evidence="2">
    <location>
        <begin position="262"/>
        <end position="266"/>
    </location>
    <ligand>
        <name>substrate</name>
    </ligand>
</feature>
<feature type="binding site" evidence="1">
    <location>
        <begin position="331"/>
        <end position="332"/>
    </location>
    <ligand>
        <name>NADP(+)</name>
        <dbReference type="ChEBI" id="CHEBI:58349"/>
    </ligand>
</feature>
<dbReference type="EC" id="1.-.-.-" evidence="3"/>
<dbReference type="EMBL" id="GL985060">
    <property type="protein sequence ID" value="EGR50063.1"/>
    <property type="molecule type" value="Genomic_DNA"/>
</dbReference>
<dbReference type="RefSeq" id="XP_006963601.1">
    <property type="nucleotide sequence ID" value="XM_006963539.1"/>
</dbReference>
<dbReference type="SMR" id="G0REX7"/>
<dbReference type="STRING" id="431241.G0REX7"/>
<dbReference type="EnsemblFungi" id="EGR50063">
    <property type="protein sequence ID" value="EGR50063"/>
    <property type="gene ID" value="TRIREDRAFT_58289"/>
</dbReference>
<dbReference type="GeneID" id="18486266"/>
<dbReference type="KEGG" id="tre:TRIREDRAFT_58289"/>
<dbReference type="VEuPathDB" id="FungiDB:TRIREDRAFT_58289"/>
<dbReference type="eggNOG" id="KOG1198">
    <property type="taxonomic scope" value="Eukaryota"/>
</dbReference>
<dbReference type="HOGENOM" id="CLU_026673_16_1_1"/>
<dbReference type="OrthoDB" id="48317at2759"/>
<dbReference type="Proteomes" id="UP000008984">
    <property type="component" value="Unassembled WGS sequence"/>
</dbReference>
<dbReference type="GO" id="GO:0000166">
    <property type="term" value="F:nucleotide binding"/>
    <property type="evidence" value="ECO:0007669"/>
    <property type="project" value="UniProtKB-KW"/>
</dbReference>
<dbReference type="GO" id="GO:0016651">
    <property type="term" value="F:oxidoreductase activity, acting on NAD(P)H"/>
    <property type="evidence" value="ECO:0007669"/>
    <property type="project" value="InterPro"/>
</dbReference>
<dbReference type="CDD" id="cd08249">
    <property type="entry name" value="enoyl_reductase_like"/>
    <property type="match status" value="1"/>
</dbReference>
<dbReference type="Gene3D" id="3.90.180.10">
    <property type="entry name" value="Medium-chain alcohol dehydrogenases, catalytic domain"/>
    <property type="match status" value="1"/>
</dbReference>
<dbReference type="Gene3D" id="3.40.50.720">
    <property type="entry name" value="NAD(P)-binding Rossmann-like Domain"/>
    <property type="match status" value="1"/>
</dbReference>
<dbReference type="InterPro" id="IPR013154">
    <property type="entry name" value="ADH-like_N"/>
</dbReference>
<dbReference type="InterPro" id="IPR011032">
    <property type="entry name" value="GroES-like_sf"/>
</dbReference>
<dbReference type="InterPro" id="IPR036291">
    <property type="entry name" value="NAD(P)-bd_dom_sf"/>
</dbReference>
<dbReference type="InterPro" id="IPR020843">
    <property type="entry name" value="PKS_ER"/>
</dbReference>
<dbReference type="InterPro" id="IPR047122">
    <property type="entry name" value="Trans-enoyl_RdTase-like"/>
</dbReference>
<dbReference type="PANTHER" id="PTHR45348">
    <property type="entry name" value="HYPOTHETICAL OXIDOREDUCTASE (EUROFUNG)"/>
    <property type="match status" value="1"/>
</dbReference>
<dbReference type="PANTHER" id="PTHR45348:SF6">
    <property type="entry name" value="TRANS-ENOYL REDUCTASE APDC"/>
    <property type="match status" value="1"/>
</dbReference>
<dbReference type="Pfam" id="PF08240">
    <property type="entry name" value="ADH_N"/>
    <property type="match status" value="1"/>
</dbReference>
<dbReference type="SMART" id="SM00829">
    <property type="entry name" value="PKS_ER"/>
    <property type="match status" value="1"/>
</dbReference>
<dbReference type="SUPFAM" id="SSF50129">
    <property type="entry name" value="GroES-like"/>
    <property type="match status" value="1"/>
</dbReference>
<dbReference type="SUPFAM" id="SSF51735">
    <property type="entry name" value="NAD(P)-binding Rossmann-fold domains"/>
    <property type="match status" value="1"/>
</dbReference>
<sequence length="350" mass="37205">MTVIDVLPQTQRALKIVGPNAVSVNAAAPLPDIEPTDVLVRVVCVSINPVDGKAADMSPQLGATSGTDFSGVVVALGADVEADNWREANTMKPVRIGDRVFGGIFGNDPLRPHNGAFADYVAVPARLVWHIPTGTDFATAATMGAAIATVGLSLFNYLGLPLPSKSKAGLPVVTTCSAASSTNVLQLGAEAWFDYKSPTCGADIREHTNDSLAFALDCITDTASMGICYEALGSAGGRYVALDAFPVRGHTRRSVVPEWVCTPTQFGKAIRWTPPYDLEPRPYDLKCAELWYVVAQRLIDEGLIASHPLEKRNGGLSAVPEGMEEVRRGQIKGKKLVYTILDSEPIAVSA</sequence>
<accession>G0REX7</accession>
<keyword id="KW-0521">NADP</keyword>
<keyword id="KW-0547">Nucleotide-binding</keyword>
<keyword id="KW-0560">Oxidoreductase</keyword>
<keyword id="KW-1185">Reference proteome</keyword>
<protein>
    <recommendedName>
        <fullName evidence="4">Trans-enoyl reductase iliB</fullName>
        <ecNumber evidence="3">1.-.-.-</ecNumber>
    </recommendedName>
    <alternativeName>
        <fullName evidence="4">Ilicicolin H biosynthesis cluster protein B</fullName>
    </alternativeName>
</protein>
<name>ILIB_HYPJQ</name>